<keyword id="KW-0413">Isomerase</keyword>
<feature type="chain" id="PRO_1000017013" description="Ribose-5-phosphate isomerase A">
    <location>
        <begin position="1"/>
        <end position="227"/>
    </location>
</feature>
<feature type="active site" description="Proton acceptor" evidence="1">
    <location>
        <position position="104"/>
    </location>
</feature>
<feature type="binding site" evidence="1">
    <location>
        <begin position="26"/>
        <end position="29"/>
    </location>
    <ligand>
        <name>substrate</name>
    </ligand>
</feature>
<feature type="binding site" evidence="1">
    <location>
        <begin position="82"/>
        <end position="85"/>
    </location>
    <ligand>
        <name>substrate</name>
    </ligand>
</feature>
<feature type="binding site" evidence="1">
    <location>
        <begin position="95"/>
        <end position="98"/>
    </location>
    <ligand>
        <name>substrate</name>
    </ligand>
</feature>
<feature type="binding site" evidence="1">
    <location>
        <position position="122"/>
    </location>
    <ligand>
        <name>substrate</name>
    </ligand>
</feature>
<name>RPIA_STRPM</name>
<reference key="1">
    <citation type="journal article" date="2005" name="J. Infect. Dis.">
        <title>Genome sequence of a serotype M28 strain of group A Streptococcus: potential new insights into puerperal sepsis and bacterial disease specificity.</title>
        <authorList>
            <person name="Green N.M."/>
            <person name="Zhang S."/>
            <person name="Porcella S.F."/>
            <person name="Nagiec M.J."/>
            <person name="Barbian K.D."/>
            <person name="Beres S.B."/>
            <person name="Lefebvre R.B."/>
            <person name="Musser J.M."/>
        </authorList>
    </citation>
    <scope>NUCLEOTIDE SEQUENCE [LARGE SCALE GENOMIC DNA]</scope>
    <source>
        <strain>MGAS6180</strain>
    </source>
</reference>
<sequence length="227" mass="24363">MEALKKIAGVTAAQYVTDGMTIGLGTGSTAYYFVEEIGRRVKQEGLQVVGVTTSSVTSKQAEVLGIPLKSIDDIDSIDLTVDGADEVDKDFNGIKGGGAALLMEKIVATPTKEYIWVVDASKMVEHLGAFKLPVEVVQYGADRLFRVFEKAGYKPSFRMKGDSRLVTDMQNYIIDLDLGCIKDPVAFGHLLDGTVGVVEHGLFNGMVDKVIVASKDGVTVLEVPKAS</sequence>
<organism>
    <name type="scientific">Streptococcus pyogenes serotype M28 (strain MGAS6180)</name>
    <dbReference type="NCBI Taxonomy" id="319701"/>
    <lineage>
        <taxon>Bacteria</taxon>
        <taxon>Bacillati</taxon>
        <taxon>Bacillota</taxon>
        <taxon>Bacilli</taxon>
        <taxon>Lactobacillales</taxon>
        <taxon>Streptococcaceae</taxon>
        <taxon>Streptococcus</taxon>
    </lineage>
</organism>
<protein>
    <recommendedName>
        <fullName evidence="1">Ribose-5-phosphate isomerase A</fullName>
        <ecNumber evidence="1">5.3.1.6</ecNumber>
    </recommendedName>
    <alternativeName>
        <fullName evidence="1">Phosphoriboisomerase A</fullName>
        <shortName evidence="1">PRI</shortName>
    </alternativeName>
</protein>
<comment type="function">
    <text evidence="1">Catalyzes the reversible conversion of ribose-5-phosphate to ribulose 5-phosphate.</text>
</comment>
<comment type="catalytic activity">
    <reaction evidence="1">
        <text>aldehydo-D-ribose 5-phosphate = D-ribulose 5-phosphate</text>
        <dbReference type="Rhea" id="RHEA:14657"/>
        <dbReference type="ChEBI" id="CHEBI:58121"/>
        <dbReference type="ChEBI" id="CHEBI:58273"/>
        <dbReference type="EC" id="5.3.1.6"/>
    </reaction>
</comment>
<comment type="pathway">
    <text evidence="1">Carbohydrate degradation; pentose phosphate pathway; D-ribose 5-phosphate from D-ribulose 5-phosphate (non-oxidative stage): step 1/1.</text>
</comment>
<comment type="subunit">
    <text evidence="1">Homodimer.</text>
</comment>
<comment type="similarity">
    <text evidence="1">Belongs to the ribose 5-phosphate isomerase family.</text>
</comment>
<evidence type="ECO:0000255" key="1">
    <source>
        <dbReference type="HAMAP-Rule" id="MF_00170"/>
    </source>
</evidence>
<dbReference type="EC" id="5.3.1.6" evidence="1"/>
<dbReference type="EMBL" id="CP000056">
    <property type="protein sequence ID" value="AAX71788.1"/>
    <property type="molecule type" value="Genomic_DNA"/>
</dbReference>
<dbReference type="RefSeq" id="WP_011284704.1">
    <property type="nucleotide sequence ID" value="NC_007296.2"/>
</dbReference>
<dbReference type="SMR" id="Q48U18"/>
<dbReference type="KEGG" id="spb:M28_Spy0675"/>
<dbReference type="HOGENOM" id="CLU_056590_1_0_9"/>
<dbReference type="UniPathway" id="UPA00115">
    <property type="reaction ID" value="UER00412"/>
</dbReference>
<dbReference type="GO" id="GO:0004751">
    <property type="term" value="F:ribose-5-phosphate isomerase activity"/>
    <property type="evidence" value="ECO:0007669"/>
    <property type="project" value="UniProtKB-UniRule"/>
</dbReference>
<dbReference type="GO" id="GO:0009052">
    <property type="term" value="P:pentose-phosphate shunt, non-oxidative branch"/>
    <property type="evidence" value="ECO:0007669"/>
    <property type="project" value="UniProtKB-UniRule"/>
</dbReference>
<dbReference type="CDD" id="cd01398">
    <property type="entry name" value="RPI_A"/>
    <property type="match status" value="1"/>
</dbReference>
<dbReference type="FunFam" id="3.40.50.1360:FF:000001">
    <property type="entry name" value="Ribose-5-phosphate isomerase A"/>
    <property type="match status" value="1"/>
</dbReference>
<dbReference type="Gene3D" id="3.30.70.260">
    <property type="match status" value="1"/>
</dbReference>
<dbReference type="Gene3D" id="3.40.50.1360">
    <property type="match status" value="1"/>
</dbReference>
<dbReference type="HAMAP" id="MF_00170">
    <property type="entry name" value="Rib_5P_isom_A"/>
    <property type="match status" value="1"/>
</dbReference>
<dbReference type="InterPro" id="IPR037171">
    <property type="entry name" value="NagB/RpiA_transferase-like"/>
</dbReference>
<dbReference type="InterPro" id="IPR050262">
    <property type="entry name" value="Ribose-5P_isomerase"/>
</dbReference>
<dbReference type="InterPro" id="IPR020672">
    <property type="entry name" value="Ribose5P_isomerase_typA_subgr"/>
</dbReference>
<dbReference type="InterPro" id="IPR004788">
    <property type="entry name" value="Ribose5P_isomerase_type_A"/>
</dbReference>
<dbReference type="NCBIfam" id="NF001924">
    <property type="entry name" value="PRK00702.1"/>
    <property type="match status" value="1"/>
</dbReference>
<dbReference type="NCBIfam" id="TIGR00021">
    <property type="entry name" value="rpiA"/>
    <property type="match status" value="1"/>
</dbReference>
<dbReference type="PANTHER" id="PTHR43748">
    <property type="entry name" value="RIBOSE-5-PHOSPHATE ISOMERASE 3, CHLOROPLASTIC-RELATED"/>
    <property type="match status" value="1"/>
</dbReference>
<dbReference type="PANTHER" id="PTHR43748:SF3">
    <property type="entry name" value="RIBOSE-5-PHOSPHATE ISOMERASE 3, CHLOROPLASTIC-RELATED"/>
    <property type="match status" value="1"/>
</dbReference>
<dbReference type="Pfam" id="PF06026">
    <property type="entry name" value="Rib_5-P_isom_A"/>
    <property type="match status" value="1"/>
</dbReference>
<dbReference type="SUPFAM" id="SSF75445">
    <property type="entry name" value="D-ribose-5-phosphate isomerase (RpiA), lid domain"/>
    <property type="match status" value="1"/>
</dbReference>
<dbReference type="SUPFAM" id="SSF100950">
    <property type="entry name" value="NagB/RpiA/CoA transferase-like"/>
    <property type="match status" value="1"/>
</dbReference>
<proteinExistence type="inferred from homology"/>
<accession>Q48U18</accession>
<gene>
    <name evidence="1" type="primary">rpiA</name>
    <name type="ordered locus">M28_Spy0675</name>
</gene>